<keyword id="KW-0903">Direct protein sequencing</keyword>
<proteinExistence type="evidence at protein level"/>
<reference key="1">
    <citation type="journal article" date="2009" name="ChemBioChem">
        <title>Evolution of nacre: biochemistry and 'shellomics' of the shell organic matrix of the cephalopod Nautilus macromphalus.</title>
        <authorList>
            <person name="Marie B."/>
            <person name="Marin F."/>
            <person name="Marie A."/>
            <person name="Bedouet L."/>
            <person name="Dubost L."/>
            <person name="Alcaraz G."/>
            <person name="Milet C."/>
            <person name="Luquet G."/>
        </authorList>
    </citation>
    <scope>PROTEIN SEQUENCE</scope>
    <scope>TISSUE SPECIFICITY</scope>
    <source>
        <tissue>Shell</tissue>
    </source>
</reference>
<sequence length="8" mass="816">VSVVGTVR</sequence>
<protein>
    <recommendedName>
        <fullName evidence="2">Uncharacterized protein IMPP2</fullName>
    </recommendedName>
</protein>
<evidence type="ECO:0000269" key="1">
    <source>
    </source>
</evidence>
<evidence type="ECO:0000303" key="2">
    <source>
    </source>
</evidence>
<comment type="tissue specificity">
    <text evidence="1">Nacreous layer of shell.</text>
</comment>
<organism>
    <name type="scientific">Nautilus macromphalus</name>
    <name type="common">Bellybutton nautilus</name>
    <dbReference type="NCBI Taxonomy" id="34576"/>
    <lineage>
        <taxon>Eukaryota</taxon>
        <taxon>Metazoa</taxon>
        <taxon>Spiralia</taxon>
        <taxon>Lophotrochozoa</taxon>
        <taxon>Mollusca</taxon>
        <taxon>Cephalopoda</taxon>
        <taxon>Nautiloidea</taxon>
        <taxon>Nautilida</taxon>
        <taxon>Nautilidae</taxon>
        <taxon>Nautilus</taxon>
    </lineage>
</organism>
<accession>P85384</accession>
<feature type="chain" id="PRO_0000371463" description="Uncharacterized protein IMPP2">
    <location>
        <begin position="1" status="less than"/>
        <end position="8" status="greater than"/>
    </location>
</feature>
<feature type="non-terminal residue" evidence="2">
    <location>
        <position position="1"/>
    </location>
</feature>
<feature type="non-terminal residue" evidence="2">
    <location>
        <position position="8"/>
    </location>
</feature>
<name>IMP02_NAUMA</name>